<evidence type="ECO:0000255" key="1">
    <source>
        <dbReference type="HAMAP-Rule" id="MF_00212"/>
    </source>
</evidence>
<organism>
    <name type="scientific">Serratia proteamaculans (strain 568)</name>
    <dbReference type="NCBI Taxonomy" id="399741"/>
    <lineage>
        <taxon>Bacteria</taxon>
        <taxon>Pseudomonadati</taxon>
        <taxon>Pseudomonadota</taxon>
        <taxon>Gammaproteobacteria</taxon>
        <taxon>Enterobacterales</taxon>
        <taxon>Yersiniaceae</taxon>
        <taxon>Serratia</taxon>
    </lineage>
</organism>
<comment type="catalytic activity">
    <reaction evidence="1">
        <text>(S)-malate + a quinone = a quinol + oxaloacetate</text>
        <dbReference type="Rhea" id="RHEA:46012"/>
        <dbReference type="ChEBI" id="CHEBI:15589"/>
        <dbReference type="ChEBI" id="CHEBI:16452"/>
        <dbReference type="ChEBI" id="CHEBI:24646"/>
        <dbReference type="ChEBI" id="CHEBI:132124"/>
        <dbReference type="EC" id="1.1.5.4"/>
    </reaction>
</comment>
<comment type="cofactor">
    <cofactor evidence="1">
        <name>FAD</name>
        <dbReference type="ChEBI" id="CHEBI:57692"/>
    </cofactor>
</comment>
<comment type="pathway">
    <text evidence="1">Carbohydrate metabolism; tricarboxylic acid cycle; oxaloacetate from (S)-malate (quinone route): step 1/1.</text>
</comment>
<comment type="similarity">
    <text evidence="1">Belongs to the MQO family.</text>
</comment>
<protein>
    <recommendedName>
        <fullName evidence="1">Probable malate:quinone oxidoreductase</fullName>
        <ecNumber evidence="1">1.1.5.4</ecNumber>
    </recommendedName>
    <alternativeName>
        <fullName evidence="1">MQO</fullName>
    </alternativeName>
    <alternativeName>
        <fullName evidence="1">Malate dehydrogenase [quinone]</fullName>
    </alternativeName>
</protein>
<feature type="chain" id="PRO_1000058628" description="Probable malate:quinone oxidoreductase">
    <location>
        <begin position="1"/>
        <end position="525"/>
    </location>
</feature>
<reference key="1">
    <citation type="submission" date="2007-09" db="EMBL/GenBank/DDBJ databases">
        <title>Complete sequence of chromosome of Serratia proteamaculans 568.</title>
        <authorList>
            <consortium name="US DOE Joint Genome Institute"/>
            <person name="Copeland A."/>
            <person name="Lucas S."/>
            <person name="Lapidus A."/>
            <person name="Barry K."/>
            <person name="Glavina del Rio T."/>
            <person name="Dalin E."/>
            <person name="Tice H."/>
            <person name="Pitluck S."/>
            <person name="Chain P."/>
            <person name="Malfatti S."/>
            <person name="Shin M."/>
            <person name="Vergez L."/>
            <person name="Schmutz J."/>
            <person name="Larimer F."/>
            <person name="Land M."/>
            <person name="Hauser L."/>
            <person name="Kyrpides N."/>
            <person name="Kim E."/>
            <person name="Taghavi S."/>
            <person name="Newman L."/>
            <person name="Vangronsveld J."/>
            <person name="van der Lelie D."/>
            <person name="Richardson P."/>
        </authorList>
    </citation>
    <scope>NUCLEOTIDE SEQUENCE [LARGE SCALE GENOMIC DNA]</scope>
    <source>
        <strain>568</strain>
    </source>
</reference>
<proteinExistence type="inferred from homology"/>
<gene>
    <name evidence="1" type="primary">mqo</name>
    <name type="ordered locus">Spro_1524</name>
</gene>
<keyword id="KW-0274">FAD</keyword>
<keyword id="KW-0285">Flavoprotein</keyword>
<keyword id="KW-0560">Oxidoreductase</keyword>
<keyword id="KW-0816">Tricarboxylic acid cycle</keyword>
<sequence length="525" mass="58182">MRKILVLIFCLNLFGVTQQAAAEENKTVDVVLIGGGIMSATLGTYLHELEPNWSIDMYERMNGVAEESSNGWNNAGTGHSAFAEMNYTPEKKDGSIDISKAVVVNESFEISRQFWSYQVKNNVLKDPKSFINSVPHMSFVWGDDNVNFLRKRYAALQHSTLFRGMEYSEDANQIKQWAPLVMDGRDPKQKIAATRMPLGTDVNFGVITHQLVDTLTKNPNFKLNLSHEVRDIKRNDDNTWRVTVADLTRDGKETTVNAKFVFIGAGGASLTLLQKTGIPEAEGYGAFPVGGQFLVTTNPEIANQHLAKVYGLASVGSPPMSVPHLDTRMLDGKRVLLFGPFATFSGKFLKNGSLFDLLHSLSTSNLMPMTHVGLDNFDLVKYLVGQLMMNDDDRFAALKEYFPEAKQADWKLWTAGQRVQIIKKDDEKGGLLQFGTEVVSAKDGSIAALLGASPGASTAAPIMLHLMETVFKDKVATPEWQSKLKEIIPSYGHKLNGDIEMTNKIRGYTSSVLQLDYIEVKPETN</sequence>
<accession>A8GBY8</accession>
<dbReference type="EC" id="1.1.5.4" evidence="1"/>
<dbReference type="EMBL" id="CP000826">
    <property type="protein sequence ID" value="ABV40628.1"/>
    <property type="molecule type" value="Genomic_DNA"/>
</dbReference>
<dbReference type="SMR" id="A8GBY8"/>
<dbReference type="STRING" id="399741.Spro_1524"/>
<dbReference type="KEGG" id="spe:Spro_1524"/>
<dbReference type="eggNOG" id="COG0579">
    <property type="taxonomic scope" value="Bacteria"/>
</dbReference>
<dbReference type="HOGENOM" id="CLU_028151_0_0_6"/>
<dbReference type="OrthoDB" id="9763983at2"/>
<dbReference type="UniPathway" id="UPA00223">
    <property type="reaction ID" value="UER01008"/>
</dbReference>
<dbReference type="GO" id="GO:0047545">
    <property type="term" value="F:2-hydroxyglutarate dehydrogenase activity"/>
    <property type="evidence" value="ECO:0007669"/>
    <property type="project" value="TreeGrafter"/>
</dbReference>
<dbReference type="GO" id="GO:0008924">
    <property type="term" value="F:L-malate dehydrogenase (quinone) activity"/>
    <property type="evidence" value="ECO:0007669"/>
    <property type="project" value="UniProtKB-UniRule"/>
</dbReference>
<dbReference type="GO" id="GO:0006099">
    <property type="term" value="P:tricarboxylic acid cycle"/>
    <property type="evidence" value="ECO:0007669"/>
    <property type="project" value="UniProtKB-UniRule"/>
</dbReference>
<dbReference type="Gene3D" id="3.50.50.60">
    <property type="entry name" value="FAD/NAD(P)-binding domain"/>
    <property type="match status" value="1"/>
</dbReference>
<dbReference type="HAMAP" id="MF_00212">
    <property type="entry name" value="MQO"/>
    <property type="match status" value="1"/>
</dbReference>
<dbReference type="InterPro" id="IPR036188">
    <property type="entry name" value="FAD/NAD-bd_sf"/>
</dbReference>
<dbReference type="InterPro" id="IPR006231">
    <property type="entry name" value="MQO"/>
</dbReference>
<dbReference type="NCBIfam" id="TIGR01320">
    <property type="entry name" value="mal_quin_oxido"/>
    <property type="match status" value="1"/>
</dbReference>
<dbReference type="NCBIfam" id="NF003603">
    <property type="entry name" value="PRK05257.1-1"/>
    <property type="match status" value="1"/>
</dbReference>
<dbReference type="NCBIfam" id="NF003605">
    <property type="entry name" value="PRK05257.1-4"/>
    <property type="match status" value="1"/>
</dbReference>
<dbReference type="NCBIfam" id="NF003606">
    <property type="entry name" value="PRK05257.2-1"/>
    <property type="match status" value="1"/>
</dbReference>
<dbReference type="NCBIfam" id="NF003608">
    <property type="entry name" value="PRK05257.2-4"/>
    <property type="match status" value="1"/>
</dbReference>
<dbReference type="NCBIfam" id="NF003609">
    <property type="entry name" value="PRK05257.2-5"/>
    <property type="match status" value="1"/>
</dbReference>
<dbReference type="NCBIfam" id="NF003611">
    <property type="entry name" value="PRK05257.3-2"/>
    <property type="match status" value="1"/>
</dbReference>
<dbReference type="NCBIfam" id="NF009875">
    <property type="entry name" value="PRK13339.1"/>
    <property type="match status" value="1"/>
</dbReference>
<dbReference type="PANTHER" id="PTHR43104">
    <property type="entry name" value="L-2-HYDROXYGLUTARATE DEHYDROGENASE, MITOCHONDRIAL"/>
    <property type="match status" value="1"/>
</dbReference>
<dbReference type="PANTHER" id="PTHR43104:SF2">
    <property type="entry name" value="L-2-HYDROXYGLUTARATE DEHYDROGENASE, MITOCHONDRIAL"/>
    <property type="match status" value="1"/>
</dbReference>
<dbReference type="Pfam" id="PF06039">
    <property type="entry name" value="Mqo"/>
    <property type="match status" value="1"/>
</dbReference>
<dbReference type="SUPFAM" id="SSF51905">
    <property type="entry name" value="FAD/NAD(P)-binding domain"/>
    <property type="match status" value="1"/>
</dbReference>
<name>MQO_SERP5</name>